<protein>
    <recommendedName>
        <fullName evidence="1">Arginine--tRNA ligase</fullName>
        <ecNumber evidence="1">6.1.1.19</ecNumber>
    </recommendedName>
    <alternativeName>
        <fullName evidence="1">Arginyl-tRNA synthetase</fullName>
        <shortName evidence="1">ArgRS</shortName>
    </alternativeName>
</protein>
<proteinExistence type="inferred from homology"/>
<comment type="catalytic activity">
    <reaction evidence="1">
        <text>tRNA(Arg) + L-arginine + ATP = L-arginyl-tRNA(Arg) + AMP + diphosphate</text>
        <dbReference type="Rhea" id="RHEA:20301"/>
        <dbReference type="Rhea" id="RHEA-COMP:9658"/>
        <dbReference type="Rhea" id="RHEA-COMP:9673"/>
        <dbReference type="ChEBI" id="CHEBI:30616"/>
        <dbReference type="ChEBI" id="CHEBI:32682"/>
        <dbReference type="ChEBI" id="CHEBI:33019"/>
        <dbReference type="ChEBI" id="CHEBI:78442"/>
        <dbReference type="ChEBI" id="CHEBI:78513"/>
        <dbReference type="ChEBI" id="CHEBI:456215"/>
        <dbReference type="EC" id="6.1.1.19"/>
    </reaction>
</comment>
<comment type="subunit">
    <text evidence="1">Monomer.</text>
</comment>
<comment type="subcellular location">
    <subcellularLocation>
        <location evidence="1">Cytoplasm</location>
    </subcellularLocation>
</comment>
<comment type="similarity">
    <text evidence="1">Belongs to the class-I aminoacyl-tRNA synthetase family.</text>
</comment>
<organism>
    <name type="scientific">Paraburkholderia phymatum (strain DSM 17167 / CIP 108236 / LMG 21445 / STM815)</name>
    <name type="common">Burkholderia phymatum</name>
    <dbReference type="NCBI Taxonomy" id="391038"/>
    <lineage>
        <taxon>Bacteria</taxon>
        <taxon>Pseudomonadati</taxon>
        <taxon>Pseudomonadota</taxon>
        <taxon>Betaproteobacteria</taxon>
        <taxon>Burkholderiales</taxon>
        <taxon>Burkholderiaceae</taxon>
        <taxon>Paraburkholderia</taxon>
    </lineage>
</organism>
<sequence length="594" mass="64907">MLPAHKHTLETLLTDVVKQVAQATQGESEAAFIAPAITLERPKVAAHGDVACNVAMQLAKPMRANPRQLAQQIVDALLADPLAKGLVDGAEVAGPGFINLRLSAASKQAVIAAVFAQREAFGRSQREAGKRVLVEFVSANPTGPLHVGHGRQAALGDAMSNVLASQGFDVHREFYYNDAGVQIGNLAISTQARARGLKPGDPGWPEAAYNGEYIADIARDYLNGETVSASDGEPVKGAGDVEDLEAIRRFAVAYLRHEQDMDLQAFGVKFDQYYLESSLYKEGRVEKTVNELIAAGKTYEQEGALWLRTTDDGDDKDRVMRKSDGTYTYFVPDVAYHETKWERGFTKVINIQGSDHHGTIARVRAGLQGLGIGIPKGYPDYVLHKMVTVMRDGQEVKISKRAGSYVTVRDLIEWSGGAVPGQEAAPDLLDEETIRRGRDAVRFFLISRKADTEFVFDVDLALKQNDENPVYYVQYAHARICSVINEWKSRYGADETGLPVVDLSPLDSERATALLQKLAEFPDMLTHAAGELAPHAVAFYLRDLAGEFHSFYNAERVLVDDEAQRNARIALLAATRQVLANGLAVIGVSAPAKM</sequence>
<dbReference type="EC" id="6.1.1.19" evidence="1"/>
<dbReference type="EMBL" id="CP001043">
    <property type="protein sequence ID" value="ACC69381.1"/>
    <property type="molecule type" value="Genomic_DNA"/>
</dbReference>
<dbReference type="RefSeq" id="WP_012399610.1">
    <property type="nucleotide sequence ID" value="NC_010622.1"/>
</dbReference>
<dbReference type="SMR" id="B2JKJ2"/>
<dbReference type="STRING" id="391038.Bphy_0188"/>
<dbReference type="KEGG" id="bph:Bphy_0188"/>
<dbReference type="eggNOG" id="COG0018">
    <property type="taxonomic scope" value="Bacteria"/>
</dbReference>
<dbReference type="HOGENOM" id="CLU_006406_0_1_4"/>
<dbReference type="OrthoDB" id="9803211at2"/>
<dbReference type="Proteomes" id="UP000001192">
    <property type="component" value="Chromosome 1"/>
</dbReference>
<dbReference type="GO" id="GO:0005737">
    <property type="term" value="C:cytoplasm"/>
    <property type="evidence" value="ECO:0007669"/>
    <property type="project" value="UniProtKB-SubCell"/>
</dbReference>
<dbReference type="GO" id="GO:0004814">
    <property type="term" value="F:arginine-tRNA ligase activity"/>
    <property type="evidence" value="ECO:0007669"/>
    <property type="project" value="UniProtKB-UniRule"/>
</dbReference>
<dbReference type="GO" id="GO:0005524">
    <property type="term" value="F:ATP binding"/>
    <property type="evidence" value="ECO:0007669"/>
    <property type="project" value="UniProtKB-UniRule"/>
</dbReference>
<dbReference type="GO" id="GO:0006420">
    <property type="term" value="P:arginyl-tRNA aminoacylation"/>
    <property type="evidence" value="ECO:0007669"/>
    <property type="project" value="UniProtKB-UniRule"/>
</dbReference>
<dbReference type="CDD" id="cd07956">
    <property type="entry name" value="Anticodon_Ia_Arg"/>
    <property type="match status" value="1"/>
</dbReference>
<dbReference type="CDD" id="cd00671">
    <property type="entry name" value="ArgRS_core"/>
    <property type="match status" value="1"/>
</dbReference>
<dbReference type="FunFam" id="1.10.730.10:FF:000008">
    <property type="entry name" value="Arginine--tRNA ligase"/>
    <property type="match status" value="1"/>
</dbReference>
<dbReference type="FunFam" id="3.40.50.620:FF:000062">
    <property type="entry name" value="Arginine--tRNA ligase"/>
    <property type="match status" value="1"/>
</dbReference>
<dbReference type="Gene3D" id="3.30.1360.70">
    <property type="entry name" value="Arginyl tRNA synthetase N-terminal domain"/>
    <property type="match status" value="1"/>
</dbReference>
<dbReference type="Gene3D" id="3.40.50.620">
    <property type="entry name" value="HUPs"/>
    <property type="match status" value="1"/>
</dbReference>
<dbReference type="Gene3D" id="1.10.730.10">
    <property type="entry name" value="Isoleucyl-tRNA Synthetase, Domain 1"/>
    <property type="match status" value="1"/>
</dbReference>
<dbReference type="HAMAP" id="MF_00123">
    <property type="entry name" value="Arg_tRNA_synth"/>
    <property type="match status" value="1"/>
</dbReference>
<dbReference type="InterPro" id="IPR001412">
    <property type="entry name" value="aa-tRNA-synth_I_CS"/>
</dbReference>
<dbReference type="InterPro" id="IPR001278">
    <property type="entry name" value="Arg-tRNA-ligase"/>
</dbReference>
<dbReference type="InterPro" id="IPR005148">
    <property type="entry name" value="Arg-tRNA-synth_N"/>
</dbReference>
<dbReference type="InterPro" id="IPR036695">
    <property type="entry name" value="Arg-tRNA-synth_N_sf"/>
</dbReference>
<dbReference type="InterPro" id="IPR035684">
    <property type="entry name" value="ArgRS_core"/>
</dbReference>
<dbReference type="InterPro" id="IPR008909">
    <property type="entry name" value="DALR_anticod-bd"/>
</dbReference>
<dbReference type="InterPro" id="IPR014729">
    <property type="entry name" value="Rossmann-like_a/b/a_fold"/>
</dbReference>
<dbReference type="InterPro" id="IPR009080">
    <property type="entry name" value="tRNAsynth_Ia_anticodon-bd"/>
</dbReference>
<dbReference type="NCBIfam" id="TIGR00456">
    <property type="entry name" value="argS"/>
    <property type="match status" value="1"/>
</dbReference>
<dbReference type="PANTHER" id="PTHR11956:SF5">
    <property type="entry name" value="ARGININE--TRNA LIGASE, CYTOPLASMIC"/>
    <property type="match status" value="1"/>
</dbReference>
<dbReference type="PANTHER" id="PTHR11956">
    <property type="entry name" value="ARGINYL-TRNA SYNTHETASE"/>
    <property type="match status" value="1"/>
</dbReference>
<dbReference type="Pfam" id="PF03485">
    <property type="entry name" value="Arg_tRNA_synt_N"/>
    <property type="match status" value="1"/>
</dbReference>
<dbReference type="Pfam" id="PF05746">
    <property type="entry name" value="DALR_1"/>
    <property type="match status" value="1"/>
</dbReference>
<dbReference type="Pfam" id="PF00750">
    <property type="entry name" value="tRNA-synt_1d"/>
    <property type="match status" value="1"/>
</dbReference>
<dbReference type="PRINTS" id="PR01038">
    <property type="entry name" value="TRNASYNTHARG"/>
</dbReference>
<dbReference type="SMART" id="SM01016">
    <property type="entry name" value="Arg_tRNA_synt_N"/>
    <property type="match status" value="1"/>
</dbReference>
<dbReference type="SMART" id="SM00836">
    <property type="entry name" value="DALR_1"/>
    <property type="match status" value="1"/>
</dbReference>
<dbReference type="SUPFAM" id="SSF47323">
    <property type="entry name" value="Anticodon-binding domain of a subclass of class I aminoacyl-tRNA synthetases"/>
    <property type="match status" value="1"/>
</dbReference>
<dbReference type="SUPFAM" id="SSF55190">
    <property type="entry name" value="Arginyl-tRNA synthetase (ArgRS), N-terminal 'additional' domain"/>
    <property type="match status" value="1"/>
</dbReference>
<dbReference type="SUPFAM" id="SSF52374">
    <property type="entry name" value="Nucleotidylyl transferase"/>
    <property type="match status" value="1"/>
</dbReference>
<dbReference type="PROSITE" id="PS00178">
    <property type="entry name" value="AA_TRNA_LIGASE_I"/>
    <property type="match status" value="1"/>
</dbReference>
<reference key="1">
    <citation type="journal article" date="2014" name="Stand. Genomic Sci.">
        <title>Complete genome sequence of Burkholderia phymatum STM815(T), a broad host range and efficient nitrogen-fixing symbiont of Mimosa species.</title>
        <authorList>
            <person name="Moulin L."/>
            <person name="Klonowska A."/>
            <person name="Caroline B."/>
            <person name="Booth K."/>
            <person name="Vriezen J.A."/>
            <person name="Melkonian R."/>
            <person name="James E.K."/>
            <person name="Young J.P."/>
            <person name="Bena G."/>
            <person name="Hauser L."/>
            <person name="Land M."/>
            <person name="Kyrpides N."/>
            <person name="Bruce D."/>
            <person name="Chain P."/>
            <person name="Copeland A."/>
            <person name="Pitluck S."/>
            <person name="Woyke T."/>
            <person name="Lizotte-Waniewski M."/>
            <person name="Bristow J."/>
            <person name="Riley M."/>
        </authorList>
    </citation>
    <scope>NUCLEOTIDE SEQUENCE [LARGE SCALE GENOMIC DNA]</scope>
    <source>
        <strain>DSM 17167 / CIP 108236 / LMG 21445 / STM815</strain>
    </source>
</reference>
<name>SYR_PARP8</name>
<evidence type="ECO:0000255" key="1">
    <source>
        <dbReference type="HAMAP-Rule" id="MF_00123"/>
    </source>
</evidence>
<feature type="chain" id="PRO_1000095344" description="Arginine--tRNA ligase">
    <location>
        <begin position="1"/>
        <end position="594"/>
    </location>
</feature>
<feature type="short sequence motif" description="'HIGH' region">
    <location>
        <begin position="139"/>
        <end position="149"/>
    </location>
</feature>
<accession>B2JKJ2</accession>
<gene>
    <name evidence="1" type="primary">argS</name>
    <name type="ordered locus">Bphy_0188</name>
</gene>
<keyword id="KW-0030">Aminoacyl-tRNA synthetase</keyword>
<keyword id="KW-0067">ATP-binding</keyword>
<keyword id="KW-0963">Cytoplasm</keyword>
<keyword id="KW-0436">Ligase</keyword>
<keyword id="KW-0547">Nucleotide-binding</keyword>
<keyword id="KW-0648">Protein biosynthesis</keyword>
<keyword id="KW-1185">Reference proteome</keyword>